<sequence>MAQKKAGGSSRNGRDSAGRRLGVKKFGGETVVAGNIIIRQRGTKMKPGSNVGLGRDHTIFALVDGHVKFERRAEGRVHVSVEALPVAAE</sequence>
<keyword id="KW-1185">Reference proteome</keyword>
<keyword id="KW-0687">Ribonucleoprotein</keyword>
<keyword id="KW-0689">Ribosomal protein</keyword>
<comment type="similarity">
    <text evidence="1">Belongs to the bacterial ribosomal protein bL27 family.</text>
</comment>
<dbReference type="EMBL" id="AM889285">
    <property type="protein sequence ID" value="CAP57115.1"/>
    <property type="molecule type" value="Genomic_DNA"/>
</dbReference>
<dbReference type="EMBL" id="CP001189">
    <property type="protein sequence ID" value="ACI52918.1"/>
    <property type="molecule type" value="Genomic_DNA"/>
</dbReference>
<dbReference type="RefSeq" id="WP_012227566.1">
    <property type="nucleotide sequence ID" value="NC_010125.1"/>
</dbReference>
<dbReference type="SMR" id="A9H0E8"/>
<dbReference type="STRING" id="272568.GDI3172"/>
<dbReference type="KEGG" id="gdi:GDI3172"/>
<dbReference type="KEGG" id="gdj:Gdia_3188"/>
<dbReference type="eggNOG" id="COG0211">
    <property type="taxonomic scope" value="Bacteria"/>
</dbReference>
<dbReference type="HOGENOM" id="CLU_095424_4_1_5"/>
<dbReference type="OrthoDB" id="9803474at2"/>
<dbReference type="Proteomes" id="UP000001176">
    <property type="component" value="Chromosome"/>
</dbReference>
<dbReference type="GO" id="GO:0022625">
    <property type="term" value="C:cytosolic large ribosomal subunit"/>
    <property type="evidence" value="ECO:0007669"/>
    <property type="project" value="TreeGrafter"/>
</dbReference>
<dbReference type="GO" id="GO:0003735">
    <property type="term" value="F:structural constituent of ribosome"/>
    <property type="evidence" value="ECO:0007669"/>
    <property type="project" value="InterPro"/>
</dbReference>
<dbReference type="GO" id="GO:0006412">
    <property type="term" value="P:translation"/>
    <property type="evidence" value="ECO:0007669"/>
    <property type="project" value="UniProtKB-UniRule"/>
</dbReference>
<dbReference type="FunFam" id="2.40.50.100:FF:000026">
    <property type="entry name" value="50S ribosomal protein L27"/>
    <property type="match status" value="1"/>
</dbReference>
<dbReference type="Gene3D" id="2.40.50.100">
    <property type="match status" value="1"/>
</dbReference>
<dbReference type="HAMAP" id="MF_00539">
    <property type="entry name" value="Ribosomal_bL27"/>
    <property type="match status" value="1"/>
</dbReference>
<dbReference type="InterPro" id="IPR001684">
    <property type="entry name" value="Ribosomal_bL27"/>
</dbReference>
<dbReference type="InterPro" id="IPR018261">
    <property type="entry name" value="Ribosomal_bL27_CS"/>
</dbReference>
<dbReference type="NCBIfam" id="TIGR00062">
    <property type="entry name" value="L27"/>
    <property type="match status" value="1"/>
</dbReference>
<dbReference type="PANTHER" id="PTHR15893:SF0">
    <property type="entry name" value="LARGE RIBOSOMAL SUBUNIT PROTEIN BL27M"/>
    <property type="match status" value="1"/>
</dbReference>
<dbReference type="PANTHER" id="PTHR15893">
    <property type="entry name" value="RIBOSOMAL PROTEIN L27"/>
    <property type="match status" value="1"/>
</dbReference>
<dbReference type="Pfam" id="PF01016">
    <property type="entry name" value="Ribosomal_L27"/>
    <property type="match status" value="1"/>
</dbReference>
<dbReference type="PRINTS" id="PR00063">
    <property type="entry name" value="RIBOSOMALL27"/>
</dbReference>
<dbReference type="SUPFAM" id="SSF110324">
    <property type="entry name" value="Ribosomal L27 protein-like"/>
    <property type="match status" value="1"/>
</dbReference>
<dbReference type="PROSITE" id="PS00831">
    <property type="entry name" value="RIBOSOMAL_L27"/>
    <property type="match status" value="1"/>
</dbReference>
<organism>
    <name type="scientific">Gluconacetobacter diazotrophicus (strain ATCC 49037 / DSM 5601 / CCUG 37298 / CIP 103539 / LMG 7603 / PAl5)</name>
    <dbReference type="NCBI Taxonomy" id="272568"/>
    <lineage>
        <taxon>Bacteria</taxon>
        <taxon>Pseudomonadati</taxon>
        <taxon>Pseudomonadota</taxon>
        <taxon>Alphaproteobacteria</taxon>
        <taxon>Acetobacterales</taxon>
        <taxon>Acetobacteraceae</taxon>
        <taxon>Gluconacetobacter</taxon>
    </lineage>
</organism>
<proteinExistence type="inferred from homology"/>
<evidence type="ECO:0000255" key="1">
    <source>
        <dbReference type="HAMAP-Rule" id="MF_00539"/>
    </source>
</evidence>
<evidence type="ECO:0000256" key="2">
    <source>
        <dbReference type="SAM" id="MobiDB-lite"/>
    </source>
</evidence>
<evidence type="ECO:0000305" key="3"/>
<accession>A9H0E8</accession>
<accession>B5ZKE4</accession>
<reference key="1">
    <citation type="journal article" date="2009" name="BMC Genomics">
        <title>Complete genome sequence of the sugarcane nitrogen-fixing endophyte Gluconacetobacter diazotrophicus Pal5.</title>
        <authorList>
            <person name="Bertalan M."/>
            <person name="Albano R."/>
            <person name="de Padua V."/>
            <person name="Rouws L."/>
            <person name="Rojas C."/>
            <person name="Hemerly A."/>
            <person name="Teixeira K."/>
            <person name="Schwab S."/>
            <person name="Araujo J."/>
            <person name="Oliveira A."/>
            <person name="Franca L."/>
            <person name="Magalhaes V."/>
            <person name="Alqueres S."/>
            <person name="Cardoso A."/>
            <person name="Almeida W."/>
            <person name="Loureiro M.M."/>
            <person name="Nogueira E."/>
            <person name="Cidade D."/>
            <person name="Oliveira D."/>
            <person name="Simao T."/>
            <person name="Macedo J."/>
            <person name="Valadao A."/>
            <person name="Dreschsel M."/>
            <person name="Freitas F."/>
            <person name="Vidal M."/>
            <person name="Guedes H."/>
            <person name="Rodrigues E."/>
            <person name="Meneses C."/>
            <person name="Brioso P."/>
            <person name="Pozzer L."/>
            <person name="Figueiredo D."/>
            <person name="Montano H."/>
            <person name="Junior J."/>
            <person name="de Souza Filho G."/>
            <person name="Martin Quintana Flores V."/>
            <person name="Ferreira B."/>
            <person name="Branco A."/>
            <person name="Gonzalez P."/>
            <person name="Guillobel H."/>
            <person name="Lemos M."/>
            <person name="Seibel L."/>
            <person name="Macedo J."/>
            <person name="Alves-Ferreira M."/>
            <person name="Sachetto-Martins G."/>
            <person name="Coelho A."/>
            <person name="Santos E."/>
            <person name="Amaral G."/>
            <person name="Neves A."/>
            <person name="Pacheco A.B."/>
            <person name="Carvalho D."/>
            <person name="Lery L."/>
            <person name="Bisch P."/>
            <person name="Rossle S.C."/>
            <person name="Urmenyi T."/>
            <person name="Rael Pereira A."/>
            <person name="Silva R."/>
            <person name="Rondinelli E."/>
            <person name="von Kruger W."/>
            <person name="Martins O."/>
            <person name="Baldani J.I."/>
            <person name="Ferreira P.C."/>
        </authorList>
    </citation>
    <scope>NUCLEOTIDE SEQUENCE [LARGE SCALE GENOMIC DNA]</scope>
    <source>
        <strain>ATCC 49037 / DSM 5601 / CCUG 37298 / CIP 103539 / LMG 7603 / PAl5</strain>
    </source>
</reference>
<reference key="2">
    <citation type="journal article" date="2010" name="Stand. Genomic Sci.">
        <title>Two genome sequences of the same bacterial strain, Gluconacetobacter diazotrophicus PAl 5, suggest a new standard in genome sequence submission.</title>
        <authorList>
            <person name="Giongo A."/>
            <person name="Tyler H.L."/>
            <person name="Zipperer U.N."/>
            <person name="Triplett E.W."/>
        </authorList>
    </citation>
    <scope>NUCLEOTIDE SEQUENCE [LARGE SCALE GENOMIC DNA]</scope>
    <source>
        <strain>ATCC 49037 / DSM 5601 / CCUG 37298 / CIP 103539 / LMG 7603 / PAl5</strain>
    </source>
</reference>
<name>RL27_GLUDA</name>
<protein>
    <recommendedName>
        <fullName evidence="1">Large ribosomal subunit protein bL27</fullName>
    </recommendedName>
    <alternativeName>
        <fullName evidence="3">50S ribosomal protein L27</fullName>
    </alternativeName>
</protein>
<feature type="chain" id="PRO_1000081892" description="Large ribosomal subunit protein bL27">
    <location>
        <begin position="1"/>
        <end position="89"/>
    </location>
</feature>
<feature type="region of interest" description="Disordered" evidence="2">
    <location>
        <begin position="1"/>
        <end position="22"/>
    </location>
</feature>
<gene>
    <name evidence="1" type="primary">rpmA</name>
    <name type="ordered locus">GDI3172</name>
    <name type="ordered locus">Gdia_3188</name>
</gene>